<reference key="1">
    <citation type="submission" date="2006-05" db="EMBL/GenBank/DDBJ databases">
        <authorList>
            <consortium name="Genoscope"/>
        </authorList>
    </citation>
    <scope>NUCLEOTIDE SEQUENCE [LARGE SCALE GENOMIC DNA]</scope>
    <source>
        <strain>RCC307</strain>
    </source>
</reference>
<proteinExistence type="inferred from homology"/>
<organism>
    <name type="scientific">Synechococcus sp. (strain RCC307)</name>
    <dbReference type="NCBI Taxonomy" id="316278"/>
    <lineage>
        <taxon>Bacteria</taxon>
        <taxon>Bacillati</taxon>
        <taxon>Cyanobacteriota</taxon>
        <taxon>Cyanophyceae</taxon>
        <taxon>Synechococcales</taxon>
        <taxon>Synechococcaceae</taxon>
        <taxon>Synechococcus</taxon>
    </lineage>
</organism>
<feature type="chain" id="PRO_1000054887" description="Small ribosomal subunit protein uS15">
    <location>
        <begin position="1"/>
        <end position="89"/>
    </location>
</feature>
<feature type="region of interest" description="Disordered" evidence="2">
    <location>
        <begin position="1"/>
        <end position="22"/>
    </location>
</feature>
<feature type="compositionally biased region" description="Basic and acidic residues" evidence="2">
    <location>
        <begin position="1"/>
        <end position="10"/>
    </location>
</feature>
<feature type="compositionally biased region" description="Polar residues" evidence="2">
    <location>
        <begin position="11"/>
        <end position="22"/>
    </location>
</feature>
<gene>
    <name evidence="1" type="primary">rpsO</name>
    <name evidence="1" type="synonym">rps15</name>
    <name type="ordered locus">SynRCC307_1323</name>
</gene>
<comment type="function">
    <text evidence="1">One of the primary rRNA binding proteins, it binds directly to 16S rRNA where it helps nucleate assembly of the platform of the 30S subunit by binding and bridging several RNA helices of the 16S rRNA.</text>
</comment>
<comment type="function">
    <text evidence="1">Forms an intersubunit bridge (bridge B4) with the 23S rRNA of the 50S subunit in the ribosome.</text>
</comment>
<comment type="subunit">
    <text evidence="1">Part of the 30S ribosomal subunit. Forms a bridge to the 50S subunit in the 70S ribosome, contacting the 23S rRNA.</text>
</comment>
<comment type="similarity">
    <text evidence="1">Belongs to the universal ribosomal protein uS15 family.</text>
</comment>
<protein>
    <recommendedName>
        <fullName evidence="1">Small ribosomal subunit protein uS15</fullName>
    </recommendedName>
    <alternativeName>
        <fullName evidence="3">30S ribosomal protein S15</fullName>
    </alternativeName>
</protein>
<keyword id="KW-1185">Reference proteome</keyword>
<keyword id="KW-0687">Ribonucleoprotein</keyword>
<keyword id="KW-0689">Ribosomal protein</keyword>
<keyword id="KW-0694">RNA-binding</keyword>
<keyword id="KW-0699">rRNA-binding</keyword>
<sequence length="89" mass="10099">MPLNTEKKQELINSHQTHATDTGSVEVQVAMLSERITQLTGHLQSNKHDYSSRQGLMKMLGRRKSLLGYLKSQSSERYDTLIQKLGIRG</sequence>
<name>RS15_SYNR3</name>
<dbReference type="EMBL" id="CT978603">
    <property type="protein sequence ID" value="CAK28226.1"/>
    <property type="molecule type" value="Genomic_DNA"/>
</dbReference>
<dbReference type="SMR" id="A5GTL7"/>
<dbReference type="STRING" id="316278.SynRCC307_1323"/>
<dbReference type="KEGG" id="syr:SynRCC307_1323"/>
<dbReference type="eggNOG" id="COG0184">
    <property type="taxonomic scope" value="Bacteria"/>
</dbReference>
<dbReference type="HOGENOM" id="CLU_148518_0_1_3"/>
<dbReference type="OrthoDB" id="9799262at2"/>
<dbReference type="Proteomes" id="UP000001115">
    <property type="component" value="Chromosome"/>
</dbReference>
<dbReference type="GO" id="GO:0022627">
    <property type="term" value="C:cytosolic small ribosomal subunit"/>
    <property type="evidence" value="ECO:0007669"/>
    <property type="project" value="TreeGrafter"/>
</dbReference>
<dbReference type="GO" id="GO:0019843">
    <property type="term" value="F:rRNA binding"/>
    <property type="evidence" value="ECO:0007669"/>
    <property type="project" value="UniProtKB-UniRule"/>
</dbReference>
<dbReference type="GO" id="GO:0003735">
    <property type="term" value="F:structural constituent of ribosome"/>
    <property type="evidence" value="ECO:0007669"/>
    <property type="project" value="InterPro"/>
</dbReference>
<dbReference type="GO" id="GO:0006412">
    <property type="term" value="P:translation"/>
    <property type="evidence" value="ECO:0007669"/>
    <property type="project" value="UniProtKB-UniRule"/>
</dbReference>
<dbReference type="CDD" id="cd00353">
    <property type="entry name" value="Ribosomal_S15p_S13e"/>
    <property type="match status" value="1"/>
</dbReference>
<dbReference type="FunFam" id="1.10.287.10:FF:000002">
    <property type="entry name" value="30S ribosomal protein S15"/>
    <property type="match status" value="1"/>
</dbReference>
<dbReference type="Gene3D" id="6.10.250.3130">
    <property type="match status" value="1"/>
</dbReference>
<dbReference type="Gene3D" id="1.10.287.10">
    <property type="entry name" value="S15/NS1, RNA-binding"/>
    <property type="match status" value="1"/>
</dbReference>
<dbReference type="HAMAP" id="MF_01343_B">
    <property type="entry name" value="Ribosomal_uS15_B"/>
    <property type="match status" value="1"/>
</dbReference>
<dbReference type="InterPro" id="IPR000589">
    <property type="entry name" value="Ribosomal_uS15"/>
</dbReference>
<dbReference type="InterPro" id="IPR005290">
    <property type="entry name" value="Ribosomal_uS15_bac-type"/>
</dbReference>
<dbReference type="InterPro" id="IPR009068">
    <property type="entry name" value="uS15_NS1_RNA-bd_sf"/>
</dbReference>
<dbReference type="NCBIfam" id="TIGR00952">
    <property type="entry name" value="S15_bact"/>
    <property type="match status" value="1"/>
</dbReference>
<dbReference type="PANTHER" id="PTHR23321">
    <property type="entry name" value="RIBOSOMAL PROTEIN S15, BACTERIAL AND ORGANELLAR"/>
    <property type="match status" value="1"/>
</dbReference>
<dbReference type="PANTHER" id="PTHR23321:SF26">
    <property type="entry name" value="SMALL RIBOSOMAL SUBUNIT PROTEIN US15M"/>
    <property type="match status" value="1"/>
</dbReference>
<dbReference type="Pfam" id="PF00312">
    <property type="entry name" value="Ribosomal_S15"/>
    <property type="match status" value="1"/>
</dbReference>
<dbReference type="SMART" id="SM01387">
    <property type="entry name" value="Ribosomal_S15"/>
    <property type="match status" value="1"/>
</dbReference>
<dbReference type="SUPFAM" id="SSF47060">
    <property type="entry name" value="S15/NS1 RNA-binding domain"/>
    <property type="match status" value="1"/>
</dbReference>
<dbReference type="PROSITE" id="PS00362">
    <property type="entry name" value="RIBOSOMAL_S15"/>
    <property type="match status" value="1"/>
</dbReference>
<accession>A5GTL7</accession>
<evidence type="ECO:0000255" key="1">
    <source>
        <dbReference type="HAMAP-Rule" id="MF_01343"/>
    </source>
</evidence>
<evidence type="ECO:0000256" key="2">
    <source>
        <dbReference type="SAM" id="MobiDB-lite"/>
    </source>
</evidence>
<evidence type="ECO:0000305" key="3"/>